<sequence length="51" mass="6236">MSHNMKGQKKRLAKAHKQNTRVPVWVIVKTNRKVVSHPRRRHWRRRSLDVK</sequence>
<reference key="1">
    <citation type="journal article" date="2002" name="Genome Res.">
        <title>The genome of Methanosarcina acetivorans reveals extensive metabolic and physiological diversity.</title>
        <authorList>
            <person name="Galagan J.E."/>
            <person name="Nusbaum C."/>
            <person name="Roy A."/>
            <person name="Endrizzi M.G."/>
            <person name="Macdonald P."/>
            <person name="FitzHugh W."/>
            <person name="Calvo S."/>
            <person name="Engels R."/>
            <person name="Smirnov S."/>
            <person name="Atnoor D."/>
            <person name="Brown A."/>
            <person name="Allen N."/>
            <person name="Naylor J."/>
            <person name="Stange-Thomann N."/>
            <person name="DeArellano K."/>
            <person name="Johnson R."/>
            <person name="Linton L."/>
            <person name="McEwan P."/>
            <person name="McKernan K."/>
            <person name="Talamas J."/>
            <person name="Tirrell A."/>
            <person name="Ye W."/>
            <person name="Zimmer A."/>
            <person name="Barber R.D."/>
            <person name="Cann I."/>
            <person name="Graham D.E."/>
            <person name="Grahame D.A."/>
            <person name="Guss A.M."/>
            <person name="Hedderich R."/>
            <person name="Ingram-Smith C."/>
            <person name="Kuettner H.C."/>
            <person name="Krzycki J.A."/>
            <person name="Leigh J.A."/>
            <person name="Li W."/>
            <person name="Liu J."/>
            <person name="Mukhopadhyay B."/>
            <person name="Reeve J.N."/>
            <person name="Smith K."/>
            <person name="Springer T.A."/>
            <person name="Umayam L.A."/>
            <person name="White O."/>
            <person name="White R.H."/>
            <person name="de Macario E.C."/>
            <person name="Ferry J.G."/>
            <person name="Jarrell K.F."/>
            <person name="Jing H."/>
            <person name="Macario A.J.L."/>
            <person name="Paulsen I.T."/>
            <person name="Pritchett M."/>
            <person name="Sowers K.R."/>
            <person name="Swanson R.V."/>
            <person name="Zinder S.H."/>
            <person name="Lander E."/>
            <person name="Metcalf W.W."/>
            <person name="Birren B."/>
        </authorList>
    </citation>
    <scope>NUCLEOTIDE SEQUENCE [LARGE SCALE GENOMIC DNA]</scope>
    <source>
        <strain>ATCC 35395 / DSM 2834 / JCM 12185 / C2A</strain>
    </source>
</reference>
<dbReference type="EMBL" id="AE010299">
    <property type="protein sequence ID" value="AAM07462.1"/>
    <property type="molecule type" value="Genomic_DNA"/>
</dbReference>
<dbReference type="RefSeq" id="WP_011024005.1">
    <property type="nucleotide sequence ID" value="NC_003552.1"/>
</dbReference>
<dbReference type="SMR" id="Q8TIN2"/>
<dbReference type="FunCoup" id="Q8TIN2">
    <property type="interactions" value="87"/>
</dbReference>
<dbReference type="STRING" id="188937.MA_4114"/>
<dbReference type="EnsemblBacteria" id="AAM07462">
    <property type="protein sequence ID" value="AAM07462"/>
    <property type="gene ID" value="MA_4114"/>
</dbReference>
<dbReference type="GeneID" id="31904673"/>
<dbReference type="KEGG" id="mac:MA_4114"/>
<dbReference type="HOGENOM" id="CLU_181948_4_0_2"/>
<dbReference type="InParanoid" id="Q8TIN2"/>
<dbReference type="OrthoDB" id="65887at2157"/>
<dbReference type="PhylomeDB" id="Q8TIN2"/>
<dbReference type="Proteomes" id="UP000002487">
    <property type="component" value="Chromosome"/>
</dbReference>
<dbReference type="GO" id="GO:0022625">
    <property type="term" value="C:cytosolic large ribosomal subunit"/>
    <property type="evidence" value="ECO:0000318"/>
    <property type="project" value="GO_Central"/>
</dbReference>
<dbReference type="GO" id="GO:0003735">
    <property type="term" value="F:structural constituent of ribosome"/>
    <property type="evidence" value="ECO:0007669"/>
    <property type="project" value="InterPro"/>
</dbReference>
<dbReference type="GO" id="GO:0006412">
    <property type="term" value="P:translation"/>
    <property type="evidence" value="ECO:0007669"/>
    <property type="project" value="UniProtKB-UniRule"/>
</dbReference>
<dbReference type="FunFam" id="1.10.1620.10:FF:000001">
    <property type="entry name" value="60S ribosomal protein-like L39"/>
    <property type="match status" value="1"/>
</dbReference>
<dbReference type="Gene3D" id="1.10.1620.10">
    <property type="entry name" value="Ribosomal protein L39e"/>
    <property type="match status" value="1"/>
</dbReference>
<dbReference type="HAMAP" id="MF_00629">
    <property type="entry name" value="Ribosomal_eL39"/>
    <property type="match status" value="1"/>
</dbReference>
<dbReference type="InterPro" id="IPR000077">
    <property type="entry name" value="Ribosomal_eL39"/>
</dbReference>
<dbReference type="InterPro" id="IPR020083">
    <property type="entry name" value="Ribosomal_eL39_CS"/>
</dbReference>
<dbReference type="InterPro" id="IPR023626">
    <property type="entry name" value="Ribosomal_eL39_dom_sf"/>
</dbReference>
<dbReference type="NCBIfam" id="NF002316">
    <property type="entry name" value="PRK01242.1"/>
    <property type="match status" value="1"/>
</dbReference>
<dbReference type="Pfam" id="PF00832">
    <property type="entry name" value="Ribosomal_L39"/>
    <property type="match status" value="1"/>
</dbReference>
<dbReference type="SUPFAM" id="SSF48662">
    <property type="entry name" value="Ribosomal protein L39e"/>
    <property type="match status" value="1"/>
</dbReference>
<dbReference type="PROSITE" id="PS00051">
    <property type="entry name" value="RIBOSOMAL_L39E"/>
    <property type="match status" value="1"/>
</dbReference>
<feature type="chain" id="PRO_0000127049" description="Large ribosomal subunit protein eL39">
    <location>
        <begin position="1"/>
        <end position="51"/>
    </location>
</feature>
<comment type="similarity">
    <text evidence="1">Belongs to the eukaryotic ribosomal protein eL39 family.</text>
</comment>
<accession>Q8TIN2</accession>
<gene>
    <name evidence="1" type="primary">rpl39e</name>
    <name type="ordered locus">MA_4114</name>
</gene>
<organism>
    <name type="scientific">Methanosarcina acetivorans (strain ATCC 35395 / DSM 2834 / JCM 12185 / C2A)</name>
    <dbReference type="NCBI Taxonomy" id="188937"/>
    <lineage>
        <taxon>Archaea</taxon>
        <taxon>Methanobacteriati</taxon>
        <taxon>Methanobacteriota</taxon>
        <taxon>Stenosarchaea group</taxon>
        <taxon>Methanomicrobia</taxon>
        <taxon>Methanosarcinales</taxon>
        <taxon>Methanosarcinaceae</taxon>
        <taxon>Methanosarcina</taxon>
    </lineage>
</organism>
<proteinExistence type="inferred from homology"/>
<evidence type="ECO:0000255" key="1">
    <source>
        <dbReference type="HAMAP-Rule" id="MF_00629"/>
    </source>
</evidence>
<evidence type="ECO:0000305" key="2"/>
<protein>
    <recommendedName>
        <fullName evidence="1">Large ribosomal subunit protein eL39</fullName>
    </recommendedName>
    <alternativeName>
        <fullName evidence="2">50S ribosomal protein L39e</fullName>
    </alternativeName>
</protein>
<name>RL39_METAC</name>
<keyword id="KW-1185">Reference proteome</keyword>
<keyword id="KW-0687">Ribonucleoprotein</keyword>
<keyword id="KW-0689">Ribosomal protein</keyword>